<sequence>MEDYIVRATAKEGTIRALAAITTNMVKEAQKVHGLSPLATVALGRTMTAAAMMSTTLKEENAVITLQIKGDGPIGGIVVVVDSSANVKGYVHNPLVYLPLNSQGKYDVAGAVGNGYLNVIKDLGLREPYVGHVDLVSGEIAEDITYYYAYSEQVPTATALGVLTNATEIVVSAGGFILQLMPGADDDTISFIENKISSIPPVSTLLAQNKSPEDILEMLLSEKDMKIIGKSPCRYLCNCSRERMERNIMTLGKEEIMGMINENHGAEAHCHFCNKKYWFSEEDLLRLVKIIESQKS</sequence>
<evidence type="ECO:0000255" key="1">
    <source>
        <dbReference type="HAMAP-Rule" id="MF_00117"/>
    </source>
</evidence>
<name>HSLO_ACET2</name>
<reference key="1">
    <citation type="submission" date="2007-02" db="EMBL/GenBank/DDBJ databases">
        <title>Complete sequence of Clostridium thermocellum ATCC 27405.</title>
        <authorList>
            <consortium name="US DOE Joint Genome Institute"/>
            <person name="Copeland A."/>
            <person name="Lucas S."/>
            <person name="Lapidus A."/>
            <person name="Barry K."/>
            <person name="Detter J.C."/>
            <person name="Glavina del Rio T."/>
            <person name="Hammon N."/>
            <person name="Israni S."/>
            <person name="Dalin E."/>
            <person name="Tice H."/>
            <person name="Pitluck S."/>
            <person name="Chertkov O."/>
            <person name="Brettin T."/>
            <person name="Bruce D."/>
            <person name="Han C."/>
            <person name="Tapia R."/>
            <person name="Gilna P."/>
            <person name="Schmutz J."/>
            <person name="Larimer F."/>
            <person name="Land M."/>
            <person name="Hauser L."/>
            <person name="Kyrpides N."/>
            <person name="Mikhailova N."/>
            <person name="Wu J.H.D."/>
            <person name="Newcomb M."/>
            <person name="Richardson P."/>
        </authorList>
    </citation>
    <scope>NUCLEOTIDE SEQUENCE [LARGE SCALE GENOMIC DNA]</scope>
    <source>
        <strain>ATCC 27405 / DSM 1237 / JCM 9322 / NBRC 103400 / NCIMB 10682 / NRRL B-4536 / VPI 7372</strain>
    </source>
</reference>
<protein>
    <recommendedName>
        <fullName evidence="1">33 kDa chaperonin</fullName>
    </recommendedName>
    <alternativeName>
        <fullName evidence="1">Heat shock protein 33 homolog</fullName>
        <shortName evidence="1">HSP33</shortName>
    </alternativeName>
</protein>
<gene>
    <name evidence="1" type="primary">hslO</name>
    <name type="ordered locus">Cthe_1852</name>
</gene>
<keyword id="KW-0143">Chaperone</keyword>
<keyword id="KW-0963">Cytoplasm</keyword>
<keyword id="KW-1015">Disulfide bond</keyword>
<keyword id="KW-0676">Redox-active center</keyword>
<keyword id="KW-1185">Reference proteome</keyword>
<keyword id="KW-0862">Zinc</keyword>
<feature type="chain" id="PRO_1000015540" description="33 kDa chaperonin">
    <location>
        <begin position="1"/>
        <end position="296"/>
    </location>
</feature>
<feature type="disulfide bond" description="Redox-active" evidence="1">
    <location>
        <begin position="237"/>
        <end position="239"/>
    </location>
</feature>
<feature type="disulfide bond" description="Redox-active" evidence="1">
    <location>
        <begin position="270"/>
        <end position="273"/>
    </location>
</feature>
<comment type="function">
    <text evidence="1">Redox regulated molecular chaperone. Protects both thermally unfolding and oxidatively damaged proteins from irreversible aggregation. Plays an important role in the bacterial defense system toward oxidative stress.</text>
</comment>
<comment type="subcellular location">
    <subcellularLocation>
        <location evidence="1">Cytoplasm</location>
    </subcellularLocation>
</comment>
<comment type="PTM">
    <text evidence="1">Under oxidizing conditions two disulfide bonds are formed involving the reactive cysteines. Under reducing conditions zinc is bound to the reactive cysteines and the protein is inactive.</text>
</comment>
<comment type="similarity">
    <text evidence="1">Belongs to the HSP33 family.</text>
</comment>
<dbReference type="EMBL" id="CP000568">
    <property type="protein sequence ID" value="ABN53073.1"/>
    <property type="molecule type" value="Genomic_DNA"/>
</dbReference>
<dbReference type="RefSeq" id="WP_003513792.1">
    <property type="nucleotide sequence ID" value="NC_009012.1"/>
</dbReference>
<dbReference type="SMR" id="A3DGJ4"/>
<dbReference type="STRING" id="203119.Cthe_1852"/>
<dbReference type="GeneID" id="35805734"/>
<dbReference type="KEGG" id="cth:Cthe_1852"/>
<dbReference type="eggNOG" id="COG1281">
    <property type="taxonomic scope" value="Bacteria"/>
</dbReference>
<dbReference type="HOGENOM" id="CLU_054493_1_0_9"/>
<dbReference type="OrthoDB" id="9776534at2"/>
<dbReference type="Proteomes" id="UP000002145">
    <property type="component" value="Chromosome"/>
</dbReference>
<dbReference type="GO" id="GO:0005737">
    <property type="term" value="C:cytoplasm"/>
    <property type="evidence" value="ECO:0007669"/>
    <property type="project" value="UniProtKB-SubCell"/>
</dbReference>
<dbReference type="GO" id="GO:0044183">
    <property type="term" value="F:protein folding chaperone"/>
    <property type="evidence" value="ECO:0007669"/>
    <property type="project" value="TreeGrafter"/>
</dbReference>
<dbReference type="GO" id="GO:0051082">
    <property type="term" value="F:unfolded protein binding"/>
    <property type="evidence" value="ECO:0007669"/>
    <property type="project" value="UniProtKB-UniRule"/>
</dbReference>
<dbReference type="GO" id="GO:0042026">
    <property type="term" value="P:protein refolding"/>
    <property type="evidence" value="ECO:0007669"/>
    <property type="project" value="TreeGrafter"/>
</dbReference>
<dbReference type="CDD" id="cd00498">
    <property type="entry name" value="Hsp33"/>
    <property type="match status" value="1"/>
</dbReference>
<dbReference type="Gene3D" id="3.55.30.10">
    <property type="entry name" value="Hsp33 domain"/>
    <property type="match status" value="1"/>
</dbReference>
<dbReference type="Gene3D" id="3.90.1280.10">
    <property type="entry name" value="HSP33 redox switch-like"/>
    <property type="match status" value="1"/>
</dbReference>
<dbReference type="HAMAP" id="MF_00117">
    <property type="entry name" value="HslO"/>
    <property type="match status" value="1"/>
</dbReference>
<dbReference type="InterPro" id="IPR000397">
    <property type="entry name" value="Heat_shock_Hsp33"/>
</dbReference>
<dbReference type="InterPro" id="IPR016154">
    <property type="entry name" value="Heat_shock_Hsp33_C"/>
</dbReference>
<dbReference type="InterPro" id="IPR016153">
    <property type="entry name" value="Heat_shock_Hsp33_N"/>
</dbReference>
<dbReference type="NCBIfam" id="NF001033">
    <property type="entry name" value="PRK00114.1"/>
    <property type="match status" value="1"/>
</dbReference>
<dbReference type="PANTHER" id="PTHR30111">
    <property type="entry name" value="33 KDA CHAPERONIN"/>
    <property type="match status" value="1"/>
</dbReference>
<dbReference type="PANTHER" id="PTHR30111:SF1">
    <property type="entry name" value="33 KDA CHAPERONIN"/>
    <property type="match status" value="1"/>
</dbReference>
<dbReference type="Pfam" id="PF01430">
    <property type="entry name" value="HSP33"/>
    <property type="match status" value="1"/>
</dbReference>
<dbReference type="PIRSF" id="PIRSF005261">
    <property type="entry name" value="Heat_shock_Hsp33"/>
    <property type="match status" value="1"/>
</dbReference>
<dbReference type="SUPFAM" id="SSF64397">
    <property type="entry name" value="Hsp33 domain"/>
    <property type="match status" value="1"/>
</dbReference>
<dbReference type="SUPFAM" id="SSF118352">
    <property type="entry name" value="HSP33 redox switch-like"/>
    <property type="match status" value="1"/>
</dbReference>
<accession>A3DGJ4</accession>
<proteinExistence type="inferred from homology"/>
<organism>
    <name type="scientific">Acetivibrio thermocellus (strain ATCC 27405 / DSM 1237 / JCM 9322 / NBRC 103400 / NCIMB 10682 / NRRL B-4536 / VPI 7372)</name>
    <name type="common">Clostridium thermocellum</name>
    <dbReference type="NCBI Taxonomy" id="203119"/>
    <lineage>
        <taxon>Bacteria</taxon>
        <taxon>Bacillati</taxon>
        <taxon>Bacillota</taxon>
        <taxon>Clostridia</taxon>
        <taxon>Eubacteriales</taxon>
        <taxon>Oscillospiraceae</taxon>
        <taxon>Acetivibrio</taxon>
    </lineage>
</organism>